<proteinExistence type="inferred from homology"/>
<reference key="1">
    <citation type="submission" date="2007-07" db="EMBL/GenBank/DDBJ databases">
        <title>Complete genome sequence of Campylobacter hominis ATCC BAA-381, a commensal isolated from the human gastrointestinal tract.</title>
        <authorList>
            <person name="Fouts D.E."/>
            <person name="Mongodin E.F."/>
            <person name="Puiu D."/>
            <person name="Sebastian Y."/>
            <person name="Miller W.G."/>
            <person name="Mandrell R.E."/>
            <person name="Nelson K.E."/>
        </authorList>
    </citation>
    <scope>NUCLEOTIDE SEQUENCE [LARGE SCALE GENOMIC DNA]</scope>
    <source>
        <strain>ATCC BAA-381 / DSM 21671 / CCUG 45161 / LMG 19568 / NCTC 13146 / CH001A</strain>
    </source>
</reference>
<comment type="function">
    <text evidence="1">The UvrABC repair system catalyzes the recognition and processing of DNA lesions. A damage recognition complex composed of 2 UvrA and 2 UvrB subunits scans DNA for abnormalities. Upon binding of the UvrA(2)B(2) complex to a putative damaged site, the DNA wraps around one UvrB monomer. DNA wrap is dependent on ATP binding by UvrB and probably causes local melting of the DNA helix, facilitating insertion of UvrB beta-hairpin between the DNA strands. Then UvrB probes one DNA strand for the presence of a lesion. If a lesion is found the UvrA subunits dissociate and the UvrB-DNA preincision complex is formed. This complex is subsequently bound by UvrC and the second UvrB is released. If no lesion is found, the DNA wraps around the other UvrB subunit that will check the other stand for damage.</text>
</comment>
<comment type="subunit">
    <text evidence="1">Forms a heterotetramer with UvrA during the search for lesions. Interacts with UvrC in an incision complex.</text>
</comment>
<comment type="subcellular location">
    <subcellularLocation>
        <location evidence="1">Cytoplasm</location>
    </subcellularLocation>
</comment>
<comment type="domain">
    <text evidence="1">The beta-hairpin motif is involved in DNA binding.</text>
</comment>
<comment type="similarity">
    <text evidence="1">Belongs to the UvrB family.</text>
</comment>
<protein>
    <recommendedName>
        <fullName evidence="1">UvrABC system protein B</fullName>
        <shortName evidence="1">Protein UvrB</shortName>
    </recommendedName>
    <alternativeName>
        <fullName evidence="1">Excinuclease ABC subunit B</fullName>
    </alternativeName>
</protein>
<feature type="chain" id="PRO_1000077872" description="UvrABC system protein B">
    <location>
        <begin position="1"/>
        <end position="657"/>
    </location>
</feature>
<feature type="domain" description="Helicase ATP-binding" evidence="1">
    <location>
        <begin position="25"/>
        <end position="163"/>
    </location>
</feature>
<feature type="domain" description="Helicase C-terminal" evidence="1">
    <location>
        <begin position="433"/>
        <end position="599"/>
    </location>
</feature>
<feature type="domain" description="UVR" evidence="1">
    <location>
        <begin position="622"/>
        <end position="657"/>
    </location>
</feature>
<feature type="short sequence motif" description="Beta-hairpin">
    <location>
        <begin position="91"/>
        <end position="114"/>
    </location>
</feature>
<feature type="short sequence motif" description="DEAD box">
    <location>
        <begin position="130"/>
        <end position="133"/>
    </location>
</feature>
<feature type="binding site" evidence="1">
    <location>
        <begin position="38"/>
        <end position="45"/>
    </location>
    <ligand>
        <name>ATP</name>
        <dbReference type="ChEBI" id="CHEBI:30616"/>
    </ligand>
</feature>
<evidence type="ECO:0000255" key="1">
    <source>
        <dbReference type="HAMAP-Rule" id="MF_00204"/>
    </source>
</evidence>
<gene>
    <name evidence="1" type="primary">uvrB</name>
    <name type="ordered locus">CHAB381_1707</name>
</gene>
<accession>A7I3X8</accession>
<dbReference type="EMBL" id="CP000776">
    <property type="protein sequence ID" value="ABS51258.1"/>
    <property type="molecule type" value="Genomic_DNA"/>
</dbReference>
<dbReference type="RefSeq" id="WP_012109526.1">
    <property type="nucleotide sequence ID" value="NC_009714.1"/>
</dbReference>
<dbReference type="SMR" id="A7I3X8"/>
<dbReference type="STRING" id="360107.CHAB381_1707"/>
<dbReference type="KEGG" id="cha:CHAB381_1707"/>
<dbReference type="eggNOG" id="COG0556">
    <property type="taxonomic scope" value="Bacteria"/>
</dbReference>
<dbReference type="HOGENOM" id="CLU_009621_2_1_7"/>
<dbReference type="OrthoDB" id="9806651at2"/>
<dbReference type="Proteomes" id="UP000002407">
    <property type="component" value="Chromosome"/>
</dbReference>
<dbReference type="GO" id="GO:0005737">
    <property type="term" value="C:cytoplasm"/>
    <property type="evidence" value="ECO:0007669"/>
    <property type="project" value="UniProtKB-SubCell"/>
</dbReference>
<dbReference type="GO" id="GO:0009380">
    <property type="term" value="C:excinuclease repair complex"/>
    <property type="evidence" value="ECO:0007669"/>
    <property type="project" value="InterPro"/>
</dbReference>
<dbReference type="GO" id="GO:0005524">
    <property type="term" value="F:ATP binding"/>
    <property type="evidence" value="ECO:0007669"/>
    <property type="project" value="UniProtKB-UniRule"/>
</dbReference>
<dbReference type="GO" id="GO:0016887">
    <property type="term" value="F:ATP hydrolysis activity"/>
    <property type="evidence" value="ECO:0007669"/>
    <property type="project" value="InterPro"/>
</dbReference>
<dbReference type="GO" id="GO:0003677">
    <property type="term" value="F:DNA binding"/>
    <property type="evidence" value="ECO:0007669"/>
    <property type="project" value="UniProtKB-UniRule"/>
</dbReference>
<dbReference type="GO" id="GO:0009381">
    <property type="term" value="F:excinuclease ABC activity"/>
    <property type="evidence" value="ECO:0007669"/>
    <property type="project" value="UniProtKB-UniRule"/>
</dbReference>
<dbReference type="GO" id="GO:0004386">
    <property type="term" value="F:helicase activity"/>
    <property type="evidence" value="ECO:0007669"/>
    <property type="project" value="UniProtKB-KW"/>
</dbReference>
<dbReference type="GO" id="GO:0006289">
    <property type="term" value="P:nucleotide-excision repair"/>
    <property type="evidence" value="ECO:0007669"/>
    <property type="project" value="UniProtKB-UniRule"/>
</dbReference>
<dbReference type="GO" id="GO:0009432">
    <property type="term" value="P:SOS response"/>
    <property type="evidence" value="ECO:0007669"/>
    <property type="project" value="UniProtKB-UniRule"/>
</dbReference>
<dbReference type="CDD" id="cd17916">
    <property type="entry name" value="DEXHc_UvrB"/>
    <property type="match status" value="1"/>
</dbReference>
<dbReference type="CDD" id="cd18790">
    <property type="entry name" value="SF2_C_UvrB"/>
    <property type="match status" value="1"/>
</dbReference>
<dbReference type="Gene3D" id="6.10.140.240">
    <property type="match status" value="1"/>
</dbReference>
<dbReference type="Gene3D" id="3.40.50.300">
    <property type="entry name" value="P-loop containing nucleotide triphosphate hydrolases"/>
    <property type="match status" value="3"/>
</dbReference>
<dbReference type="Gene3D" id="4.10.860.10">
    <property type="entry name" value="UVR domain"/>
    <property type="match status" value="1"/>
</dbReference>
<dbReference type="HAMAP" id="MF_00204">
    <property type="entry name" value="UvrB"/>
    <property type="match status" value="1"/>
</dbReference>
<dbReference type="InterPro" id="IPR006935">
    <property type="entry name" value="Helicase/UvrB_N"/>
</dbReference>
<dbReference type="InterPro" id="IPR014001">
    <property type="entry name" value="Helicase_ATP-bd"/>
</dbReference>
<dbReference type="InterPro" id="IPR001650">
    <property type="entry name" value="Helicase_C-like"/>
</dbReference>
<dbReference type="InterPro" id="IPR027417">
    <property type="entry name" value="P-loop_NTPase"/>
</dbReference>
<dbReference type="InterPro" id="IPR001943">
    <property type="entry name" value="UVR_dom"/>
</dbReference>
<dbReference type="InterPro" id="IPR036876">
    <property type="entry name" value="UVR_dom_sf"/>
</dbReference>
<dbReference type="InterPro" id="IPR004807">
    <property type="entry name" value="UvrB"/>
</dbReference>
<dbReference type="InterPro" id="IPR041471">
    <property type="entry name" value="UvrB_inter"/>
</dbReference>
<dbReference type="InterPro" id="IPR024759">
    <property type="entry name" value="UvrB_YAD/RRR_dom"/>
</dbReference>
<dbReference type="NCBIfam" id="NF003673">
    <property type="entry name" value="PRK05298.1"/>
    <property type="match status" value="1"/>
</dbReference>
<dbReference type="NCBIfam" id="TIGR00631">
    <property type="entry name" value="uvrb"/>
    <property type="match status" value="1"/>
</dbReference>
<dbReference type="PANTHER" id="PTHR24029">
    <property type="entry name" value="UVRABC SYSTEM PROTEIN B"/>
    <property type="match status" value="1"/>
</dbReference>
<dbReference type="PANTHER" id="PTHR24029:SF0">
    <property type="entry name" value="UVRABC SYSTEM PROTEIN B"/>
    <property type="match status" value="1"/>
</dbReference>
<dbReference type="Pfam" id="PF00271">
    <property type="entry name" value="Helicase_C"/>
    <property type="match status" value="1"/>
</dbReference>
<dbReference type="Pfam" id="PF04851">
    <property type="entry name" value="ResIII"/>
    <property type="match status" value="1"/>
</dbReference>
<dbReference type="Pfam" id="PF02151">
    <property type="entry name" value="UVR"/>
    <property type="match status" value="1"/>
</dbReference>
<dbReference type="Pfam" id="PF12344">
    <property type="entry name" value="UvrB"/>
    <property type="match status" value="1"/>
</dbReference>
<dbReference type="Pfam" id="PF17757">
    <property type="entry name" value="UvrB_inter"/>
    <property type="match status" value="1"/>
</dbReference>
<dbReference type="SMART" id="SM00487">
    <property type="entry name" value="DEXDc"/>
    <property type="match status" value="1"/>
</dbReference>
<dbReference type="SMART" id="SM00490">
    <property type="entry name" value="HELICc"/>
    <property type="match status" value="1"/>
</dbReference>
<dbReference type="SUPFAM" id="SSF46600">
    <property type="entry name" value="C-terminal UvrC-binding domain of UvrB"/>
    <property type="match status" value="1"/>
</dbReference>
<dbReference type="SUPFAM" id="SSF52540">
    <property type="entry name" value="P-loop containing nucleoside triphosphate hydrolases"/>
    <property type="match status" value="2"/>
</dbReference>
<dbReference type="PROSITE" id="PS51192">
    <property type="entry name" value="HELICASE_ATP_BIND_1"/>
    <property type="match status" value="2"/>
</dbReference>
<dbReference type="PROSITE" id="PS51194">
    <property type="entry name" value="HELICASE_CTER"/>
    <property type="match status" value="1"/>
</dbReference>
<dbReference type="PROSITE" id="PS50151">
    <property type="entry name" value="UVR"/>
    <property type="match status" value="1"/>
</dbReference>
<name>UVRB_CAMHC</name>
<organism>
    <name type="scientific">Campylobacter hominis (strain ATCC BAA-381 / DSM 21671 / CCUG 45161 / LMG 19568 / NCTC 13146 / CH001A)</name>
    <dbReference type="NCBI Taxonomy" id="360107"/>
    <lineage>
        <taxon>Bacteria</taxon>
        <taxon>Pseudomonadati</taxon>
        <taxon>Campylobacterota</taxon>
        <taxon>Epsilonproteobacteria</taxon>
        <taxon>Campylobacterales</taxon>
        <taxon>Campylobacteraceae</taxon>
        <taxon>Campylobacter</taxon>
    </lineage>
</organism>
<sequence>MKNFEIVSKFSPSKDQQNAIENITASIKNGNKYQTLLGVTGSGKTFTMANIIKNLQMPALIMTHNKSLAAQLYSEFKGFFPKNHIEYFISYYDYYQPEAYIPRQDLFIEKDSSINDELERLRLSATASLLSFDDVVTIASVSANYGLGNPAEYQGMVLFLEINKKFSLKFLLRKLVDMGYSRNDTYFDRGDFRVNGDIIDIYPAYFNDEAIRLEFFGDELDDMYHFDVIENKKTQNLKKFILYPTSQFIVGENRLKEAIKGIENELGERLEFFNDNGKLVEAQRLKQRVDFDLEMLESTGMCKGIENYARYLTGQNAGETPYSLFDYYEIKGMDYLVIIDESHVSLPQFRGMYAGDRSRKETLVEYGFRLPSALDNRPLMFDEFINKRAKFLFVSATPNDYELELSKDHVYYQILRPTGLLDPEIVLKDSDNQVEILYDMAKEVIADNERVLVTVLTKKMAEELSKYYLELGLKVKYMHSDIDAIERNELIRGLRTGDFDMLIGINLLREGLDLPEVSLIAIMDADKEGFLRSRTSLIQTMGRAARNVNGKVVMFCKKITNSMKEAIEITQKRRKYQDEYNKTHNITPKSVSRNVEESLKLDDTEAIDRAMKAEKMPSSERAKIVKDLRKQMMEAADKLEFEKAAALRDEIKKMRKL</sequence>
<keyword id="KW-0067">ATP-binding</keyword>
<keyword id="KW-0963">Cytoplasm</keyword>
<keyword id="KW-0227">DNA damage</keyword>
<keyword id="KW-0228">DNA excision</keyword>
<keyword id="KW-0234">DNA repair</keyword>
<keyword id="KW-0267">Excision nuclease</keyword>
<keyword id="KW-0347">Helicase</keyword>
<keyword id="KW-0378">Hydrolase</keyword>
<keyword id="KW-0547">Nucleotide-binding</keyword>
<keyword id="KW-1185">Reference proteome</keyword>
<keyword id="KW-0742">SOS response</keyword>